<dbReference type="EC" id="2.4.1.313" evidence="2"/>
<dbReference type="EMBL" id="AB116655">
    <property type="protein sequence ID" value="BAD13421.1"/>
    <property type="molecule type" value="mRNA"/>
</dbReference>
<dbReference type="EMBL" id="AK035259">
    <property type="protein sequence ID" value="BAC29004.1"/>
    <property type="molecule type" value="mRNA"/>
</dbReference>
<dbReference type="EMBL" id="AK041022">
    <property type="protein sequence ID" value="BAC30784.1"/>
    <property type="molecule type" value="mRNA"/>
</dbReference>
<dbReference type="EMBL" id="AK044785">
    <property type="protein sequence ID" value="BAC32091.1"/>
    <property type="molecule type" value="mRNA"/>
</dbReference>
<dbReference type="EMBL" id="AK084275">
    <property type="protein sequence ID" value="BAC39153.1"/>
    <property type="molecule type" value="mRNA"/>
</dbReference>
<dbReference type="EMBL" id="AK151677">
    <property type="protein sequence ID" value="BAE30602.1"/>
    <property type="molecule type" value="mRNA"/>
</dbReference>
<dbReference type="EMBL" id="AK153362">
    <property type="protein sequence ID" value="BAE31934.1"/>
    <property type="molecule type" value="mRNA"/>
</dbReference>
<dbReference type="EMBL" id="AK167635">
    <property type="protein sequence ID" value="BAE39686.1"/>
    <property type="molecule type" value="mRNA"/>
</dbReference>
<dbReference type="EMBL" id="BC085110">
    <property type="protein sequence ID" value="AAH85110.1"/>
    <property type="molecule type" value="mRNA"/>
</dbReference>
<dbReference type="CCDS" id="CCDS26246.1">
    <molecule id="Q8BG28-1"/>
</dbReference>
<dbReference type="RefSeq" id="NP_001349333.1">
    <molecule id="Q8BG28-1"/>
    <property type="nucleotide sequence ID" value="NM_001362404.1"/>
</dbReference>
<dbReference type="RefSeq" id="NP_001349334.1">
    <molecule id="Q8BG28-1"/>
    <property type="nucleotide sequence ID" value="NM_001362405.1"/>
</dbReference>
<dbReference type="RefSeq" id="NP_848755.1">
    <molecule id="Q8BG28-1"/>
    <property type="nucleotide sequence ID" value="NM_178640.3"/>
</dbReference>
<dbReference type="SMR" id="Q8BG28"/>
<dbReference type="FunCoup" id="Q8BG28">
    <property type="interactions" value="1074"/>
</dbReference>
<dbReference type="STRING" id="10090.ENSMUSP00000097336"/>
<dbReference type="CAZy" id="GT31">
    <property type="family name" value="Glycosyltransferase Family 31"/>
</dbReference>
<dbReference type="GlyCosmos" id="Q8BG28">
    <property type="glycosylation" value="2 sites, No reported glycans"/>
</dbReference>
<dbReference type="GlyGen" id="Q8BG28">
    <property type="glycosylation" value="2 sites"/>
</dbReference>
<dbReference type="iPTMnet" id="Q8BG28"/>
<dbReference type="PhosphoSitePlus" id="Q8BG28"/>
<dbReference type="SwissPalm" id="Q8BG28"/>
<dbReference type="PaxDb" id="10090-ENSMUSP00000097336"/>
<dbReference type="ProteomicsDB" id="277094">
    <molecule id="Q8BG28-1"/>
</dbReference>
<dbReference type="ProteomicsDB" id="277095">
    <molecule id="Q8BG28-2"/>
</dbReference>
<dbReference type="Antibodypedia" id="1593">
    <property type="antibodies" value="120 antibodies from 21 providers"/>
</dbReference>
<dbReference type="Ensembl" id="ENSMUST00000099747.5">
    <molecule id="Q8BG28-1"/>
    <property type="protein sequence ID" value="ENSMUSP00000097336.4"/>
    <property type="gene ID" value="ENSMUSG00000039242.11"/>
</dbReference>
<dbReference type="Ensembl" id="ENSMUST00000221300.2">
    <molecule id="Q8BG28-1"/>
    <property type="protein sequence ID" value="ENSMUSP00000152755.2"/>
    <property type="gene ID" value="ENSMUSG00000039242.11"/>
</dbReference>
<dbReference type="Ensembl" id="ENSMUST00000221974.2">
    <molecule id="Q8BG28-1"/>
    <property type="protein sequence ID" value="ENSMUSP00000152397.2"/>
    <property type="gene ID" value="ENSMUSG00000039242.11"/>
</dbReference>
<dbReference type="GeneID" id="97884"/>
<dbReference type="KEGG" id="mmu:97884"/>
<dbReference type="UCSC" id="uc007pmm.1">
    <molecule id="Q8BG28-2"/>
    <property type="organism name" value="mouse"/>
</dbReference>
<dbReference type="UCSC" id="uc007pmn.1">
    <molecule id="Q8BG28-1"/>
    <property type="organism name" value="mouse"/>
</dbReference>
<dbReference type="AGR" id="MGI:2145517"/>
<dbReference type="CTD" id="148789"/>
<dbReference type="MGI" id="MGI:2145517">
    <property type="gene designation" value="B3galnt2"/>
</dbReference>
<dbReference type="VEuPathDB" id="HostDB:ENSMUSG00000039242"/>
<dbReference type="eggNOG" id="KOG2287">
    <property type="taxonomic scope" value="Eukaryota"/>
</dbReference>
<dbReference type="GeneTree" id="ENSGT00940000156562"/>
<dbReference type="HOGENOM" id="CLU_591287_0_0_1"/>
<dbReference type="InParanoid" id="Q8BG28"/>
<dbReference type="OMA" id="GKWAEHD"/>
<dbReference type="OrthoDB" id="2139606at2759"/>
<dbReference type="PhylomeDB" id="Q8BG28"/>
<dbReference type="TreeFam" id="TF314311"/>
<dbReference type="Reactome" id="R-MMU-5173105">
    <property type="pathway name" value="O-linked glycosylation"/>
</dbReference>
<dbReference type="UniPathway" id="UPA00378"/>
<dbReference type="BioGRID-ORCS" id="97884">
    <property type="hits" value="5 hits in 75 CRISPR screens"/>
</dbReference>
<dbReference type="ChiTaRS" id="B3galnt2">
    <property type="organism name" value="mouse"/>
</dbReference>
<dbReference type="PRO" id="PR:Q8BG28"/>
<dbReference type="Proteomes" id="UP000000589">
    <property type="component" value="Chromosome 13"/>
</dbReference>
<dbReference type="RNAct" id="Q8BG28">
    <property type="molecule type" value="protein"/>
</dbReference>
<dbReference type="Bgee" id="ENSMUSG00000039242">
    <property type="expression patterns" value="Expressed in muscle of arm and 260 other cell types or tissues"/>
</dbReference>
<dbReference type="ExpressionAtlas" id="Q8BG28">
    <property type="expression patterns" value="baseline and differential"/>
</dbReference>
<dbReference type="GO" id="GO:0005783">
    <property type="term" value="C:endoplasmic reticulum"/>
    <property type="evidence" value="ECO:0000250"/>
    <property type="project" value="UniProtKB"/>
</dbReference>
<dbReference type="GO" id="GO:0005789">
    <property type="term" value="C:endoplasmic reticulum membrane"/>
    <property type="evidence" value="ECO:0000266"/>
    <property type="project" value="MGI"/>
</dbReference>
<dbReference type="GO" id="GO:0000139">
    <property type="term" value="C:Golgi membrane"/>
    <property type="evidence" value="ECO:0007669"/>
    <property type="project" value="UniProtKB-SubCell"/>
</dbReference>
<dbReference type="GO" id="GO:0008376">
    <property type="term" value="F:acetylgalactosaminyltransferase activity"/>
    <property type="evidence" value="ECO:0000250"/>
    <property type="project" value="UniProtKB"/>
</dbReference>
<dbReference type="GO" id="GO:0006486">
    <property type="term" value="P:protein glycosylation"/>
    <property type="evidence" value="ECO:0000250"/>
    <property type="project" value="UniProtKB"/>
</dbReference>
<dbReference type="GO" id="GO:0006493">
    <property type="term" value="P:protein O-linked glycosylation"/>
    <property type="evidence" value="ECO:0000250"/>
    <property type="project" value="UniProtKB"/>
</dbReference>
<dbReference type="GO" id="GO:0019276">
    <property type="term" value="P:UDP-N-acetylgalactosamine metabolic process"/>
    <property type="evidence" value="ECO:0000266"/>
    <property type="project" value="MGI"/>
</dbReference>
<dbReference type="FunFam" id="3.90.550.50:FF:000013">
    <property type="entry name" value="Hexosyltransferase"/>
    <property type="match status" value="1"/>
</dbReference>
<dbReference type="Gene3D" id="3.90.550.50">
    <property type="match status" value="1"/>
</dbReference>
<dbReference type="InterPro" id="IPR002659">
    <property type="entry name" value="Glyco_trans_31"/>
</dbReference>
<dbReference type="PANTHER" id="PTHR11214">
    <property type="entry name" value="BETA-1,3-N-ACETYLGLUCOSAMINYLTRANSFERASE"/>
    <property type="match status" value="1"/>
</dbReference>
<dbReference type="PANTHER" id="PTHR11214:SF219">
    <property type="entry name" value="UDP-GALNAC:BETA-1,3-N-ACETYLGALACTOSAMINYLTRANSFERASE 2"/>
    <property type="match status" value="1"/>
</dbReference>
<dbReference type="Pfam" id="PF01762">
    <property type="entry name" value="Galactosyl_T"/>
    <property type="match status" value="1"/>
</dbReference>
<evidence type="ECO:0000250" key="1"/>
<evidence type="ECO:0000250" key="2">
    <source>
        <dbReference type="UniProtKB" id="Q8NCR0"/>
    </source>
</evidence>
<evidence type="ECO:0000255" key="3"/>
<evidence type="ECO:0000269" key="4">
    <source>
    </source>
</evidence>
<evidence type="ECO:0000303" key="5">
    <source>
    </source>
</evidence>
<evidence type="ECO:0000305" key="6"/>
<gene>
    <name type="primary">B3galnt2</name>
</gene>
<accession>Q8BG28</accession>
<accession>Q5U4F9</accession>
<accession>Q8BXL0</accession>
<proteinExistence type="evidence at protein level"/>
<protein>
    <recommendedName>
        <fullName>UDP-GalNAc:beta-1,3-N-acetylgalactosaminyltransferase 2</fullName>
        <shortName>Beta-1,3-GalNAc-T2</shortName>
        <ecNumber evidence="2">2.4.1.313</ecNumber>
    </recommendedName>
    <alternativeName>
        <fullName>Beta-1,3-N-acetylgalactosaminyltransferase II</fullName>
    </alternativeName>
</protein>
<sequence>MRNWLVLLCPCVLGAALHLWHLWLRSPPDPHNTGPSAADQSALFPHWKFSHYDVVVGVLSARNNHELRNVIRNTWLKNLLHHPTLSQRVLVKFIIGARGCEVPVEDREDPYSCRLLNITNPVLNQEIEAFSFPEDASSSRLSEDRVVSVSFRVLYPIVITSLGVFYDASDVGFQRNITVKLYQTEQEEALFIARFSPPSCGVQVNKLWYKPVEQFILPESFEGTIVWESQDLHGLVSRNLHRVTVNDGGGVLRVLAAGEGALPHEFMEGVEGVAGGFIYTVQEGDALLRSLYSRPQRLADHIQDLQVEDALLQEESSVHDDIVFVDVVDTYRNVPAKLLNFYRWTVESTSFDLLLKTDDDCYIDLEAVFNRIAQKNLDGPNFWWGNFRLNWAVDRTGKWQELEYPSPAYPAFACGSGYVISKDIVDWLAGNSRRLKTYQGEDVSMGIWMAAIGPKRHQDSLWLCEKTCETGMLSSPQYSPEELSKLWELKELCGDPCQCEAKVR</sequence>
<reference key="1">
    <citation type="journal article" date="2004" name="J. Biol. Chem.">
        <title>A novel human beta1,3-N-acetylgalactosaminyltransferase that synthesizes a unique carbohydrate structure, GalNAcbeta1-3GlcNAc.</title>
        <authorList>
            <person name="Hiruma T."/>
            <person name="Togayachi A."/>
            <person name="Okamura K."/>
            <person name="Sato T."/>
            <person name="Kikuchi N."/>
            <person name="Kwon Y.D."/>
            <person name="Nakamura A."/>
            <person name="Fujimura K."/>
            <person name="Gotoh M."/>
            <person name="Tachibana K."/>
            <person name="Ishizuka Y."/>
            <person name="Noce T."/>
            <person name="Nakanishi H."/>
            <person name="Narimatsu H."/>
        </authorList>
    </citation>
    <scope>NUCLEOTIDE SEQUENCE [MRNA] (ISOFORM 1)</scope>
    <scope>TISSUE SPECIFICITY</scope>
</reference>
<reference key="2">
    <citation type="journal article" date="2005" name="Science">
        <title>The transcriptional landscape of the mammalian genome.</title>
        <authorList>
            <person name="Carninci P."/>
            <person name="Kasukawa T."/>
            <person name="Katayama S."/>
            <person name="Gough J."/>
            <person name="Frith M.C."/>
            <person name="Maeda N."/>
            <person name="Oyama R."/>
            <person name="Ravasi T."/>
            <person name="Lenhard B."/>
            <person name="Wells C."/>
            <person name="Kodzius R."/>
            <person name="Shimokawa K."/>
            <person name="Bajic V.B."/>
            <person name="Brenner S.E."/>
            <person name="Batalov S."/>
            <person name="Forrest A.R."/>
            <person name="Zavolan M."/>
            <person name="Davis M.J."/>
            <person name="Wilming L.G."/>
            <person name="Aidinis V."/>
            <person name="Allen J.E."/>
            <person name="Ambesi-Impiombato A."/>
            <person name="Apweiler R."/>
            <person name="Aturaliya R.N."/>
            <person name="Bailey T.L."/>
            <person name="Bansal M."/>
            <person name="Baxter L."/>
            <person name="Beisel K.W."/>
            <person name="Bersano T."/>
            <person name="Bono H."/>
            <person name="Chalk A.M."/>
            <person name="Chiu K.P."/>
            <person name="Choudhary V."/>
            <person name="Christoffels A."/>
            <person name="Clutterbuck D.R."/>
            <person name="Crowe M.L."/>
            <person name="Dalla E."/>
            <person name="Dalrymple B.P."/>
            <person name="de Bono B."/>
            <person name="Della Gatta G."/>
            <person name="di Bernardo D."/>
            <person name="Down T."/>
            <person name="Engstrom P."/>
            <person name="Fagiolini M."/>
            <person name="Faulkner G."/>
            <person name="Fletcher C.F."/>
            <person name="Fukushima T."/>
            <person name="Furuno M."/>
            <person name="Futaki S."/>
            <person name="Gariboldi M."/>
            <person name="Georgii-Hemming P."/>
            <person name="Gingeras T.R."/>
            <person name="Gojobori T."/>
            <person name="Green R.E."/>
            <person name="Gustincich S."/>
            <person name="Harbers M."/>
            <person name="Hayashi Y."/>
            <person name="Hensch T.K."/>
            <person name="Hirokawa N."/>
            <person name="Hill D."/>
            <person name="Huminiecki L."/>
            <person name="Iacono M."/>
            <person name="Ikeo K."/>
            <person name="Iwama A."/>
            <person name="Ishikawa T."/>
            <person name="Jakt M."/>
            <person name="Kanapin A."/>
            <person name="Katoh M."/>
            <person name="Kawasawa Y."/>
            <person name="Kelso J."/>
            <person name="Kitamura H."/>
            <person name="Kitano H."/>
            <person name="Kollias G."/>
            <person name="Krishnan S.P."/>
            <person name="Kruger A."/>
            <person name="Kummerfeld S.K."/>
            <person name="Kurochkin I.V."/>
            <person name="Lareau L.F."/>
            <person name="Lazarevic D."/>
            <person name="Lipovich L."/>
            <person name="Liu J."/>
            <person name="Liuni S."/>
            <person name="McWilliam S."/>
            <person name="Madan Babu M."/>
            <person name="Madera M."/>
            <person name="Marchionni L."/>
            <person name="Matsuda H."/>
            <person name="Matsuzawa S."/>
            <person name="Miki H."/>
            <person name="Mignone F."/>
            <person name="Miyake S."/>
            <person name="Morris K."/>
            <person name="Mottagui-Tabar S."/>
            <person name="Mulder N."/>
            <person name="Nakano N."/>
            <person name="Nakauchi H."/>
            <person name="Ng P."/>
            <person name="Nilsson R."/>
            <person name="Nishiguchi S."/>
            <person name="Nishikawa S."/>
            <person name="Nori F."/>
            <person name="Ohara O."/>
            <person name="Okazaki Y."/>
            <person name="Orlando V."/>
            <person name="Pang K.C."/>
            <person name="Pavan W.J."/>
            <person name="Pavesi G."/>
            <person name="Pesole G."/>
            <person name="Petrovsky N."/>
            <person name="Piazza S."/>
            <person name="Reed J."/>
            <person name="Reid J.F."/>
            <person name="Ring B.Z."/>
            <person name="Ringwald M."/>
            <person name="Rost B."/>
            <person name="Ruan Y."/>
            <person name="Salzberg S.L."/>
            <person name="Sandelin A."/>
            <person name="Schneider C."/>
            <person name="Schoenbach C."/>
            <person name="Sekiguchi K."/>
            <person name="Semple C.A."/>
            <person name="Seno S."/>
            <person name="Sessa L."/>
            <person name="Sheng Y."/>
            <person name="Shibata Y."/>
            <person name="Shimada H."/>
            <person name="Shimada K."/>
            <person name="Silva D."/>
            <person name="Sinclair B."/>
            <person name="Sperling S."/>
            <person name="Stupka E."/>
            <person name="Sugiura K."/>
            <person name="Sultana R."/>
            <person name="Takenaka Y."/>
            <person name="Taki K."/>
            <person name="Tammoja K."/>
            <person name="Tan S.L."/>
            <person name="Tang S."/>
            <person name="Taylor M.S."/>
            <person name="Tegner J."/>
            <person name="Teichmann S.A."/>
            <person name="Ueda H.R."/>
            <person name="van Nimwegen E."/>
            <person name="Verardo R."/>
            <person name="Wei C.L."/>
            <person name="Yagi K."/>
            <person name="Yamanishi H."/>
            <person name="Zabarovsky E."/>
            <person name="Zhu S."/>
            <person name="Zimmer A."/>
            <person name="Hide W."/>
            <person name="Bult C."/>
            <person name="Grimmond S.M."/>
            <person name="Teasdale R.D."/>
            <person name="Liu E.T."/>
            <person name="Brusic V."/>
            <person name="Quackenbush J."/>
            <person name="Wahlestedt C."/>
            <person name="Mattick J.S."/>
            <person name="Hume D.A."/>
            <person name="Kai C."/>
            <person name="Sasaki D."/>
            <person name="Tomaru Y."/>
            <person name="Fukuda S."/>
            <person name="Kanamori-Katayama M."/>
            <person name="Suzuki M."/>
            <person name="Aoki J."/>
            <person name="Arakawa T."/>
            <person name="Iida J."/>
            <person name="Imamura K."/>
            <person name="Itoh M."/>
            <person name="Kato T."/>
            <person name="Kawaji H."/>
            <person name="Kawagashira N."/>
            <person name="Kawashima T."/>
            <person name="Kojima M."/>
            <person name="Kondo S."/>
            <person name="Konno H."/>
            <person name="Nakano K."/>
            <person name="Ninomiya N."/>
            <person name="Nishio T."/>
            <person name="Okada M."/>
            <person name="Plessy C."/>
            <person name="Shibata K."/>
            <person name="Shiraki T."/>
            <person name="Suzuki S."/>
            <person name="Tagami M."/>
            <person name="Waki K."/>
            <person name="Watahiki A."/>
            <person name="Okamura-Oho Y."/>
            <person name="Suzuki H."/>
            <person name="Kawai J."/>
            <person name="Hayashizaki Y."/>
        </authorList>
    </citation>
    <scope>NUCLEOTIDE SEQUENCE [LARGE SCALE MRNA] (ISOFORMS 1 AND 2)</scope>
    <source>
        <strain>C57BL/6J</strain>
        <tissue>Aorta</tissue>
        <tissue>Bone marrow</tissue>
        <tissue>Eye</tissue>
        <tissue>Placenta</tissue>
        <tissue>Retina</tissue>
        <tissue>Urinary bladder</tissue>
        <tissue>Vein</tissue>
    </source>
</reference>
<reference key="3">
    <citation type="journal article" date="2004" name="Genome Res.">
        <title>The status, quality, and expansion of the NIH full-length cDNA project: the Mammalian Gene Collection (MGC).</title>
        <authorList>
            <consortium name="The MGC Project Team"/>
        </authorList>
    </citation>
    <scope>NUCLEOTIDE SEQUENCE [LARGE SCALE MRNA] (ISOFORM 1)</scope>
    <source>
        <tissue>Trophoblast stem cell</tissue>
    </source>
</reference>
<comment type="function">
    <text evidence="1">Beta-1,3-N-acetylgalactosaminyltransferase that synthesizes a unique carbohydrate structure, GalNAc-beta-1-3GlcNAc, on N- and O-glycans. Has no galactose nor galactosaminyl transferase activity toward any acceptor substrate. Involved in alpha-dystroglycan (DAG1) glycosylation: acts coordinately with GTDC2/POMGnT2 to synthesize a GalNAc-beta3-GlcNAc-beta-terminus at the 4-position of protein O-mannose in the biosynthesis of the phosphorylated O-mannosyl trisaccharide (N-acetylgalactosamine-beta-3-N-acetylglucosamine-beta-4-(phosphate-6-)mannose), a carbohydrate structure present in alpha-dystroglycan, which is required for binding laminin G-like domain-containing extracellular proteins with high affinity (By similarity).</text>
</comment>
<comment type="catalytic activity">
    <reaction evidence="2">
        <text>3-O-(N-acetyl-beta-D-glucosaminyl-(1-&gt;4)-alpha-D-mannosyl)-L-threonyl-[protein] + UDP-N-acetyl-alpha-D-galactosamine = 3-O-[beta-D-GalNAc-(1-&gt;3)-beta-D-GlcNAc-(1-&gt;4)-alpha-D-Man]-L-Thr-[protein] + UDP + H(+)</text>
        <dbReference type="Rhea" id="RHEA:37667"/>
        <dbReference type="Rhea" id="RHEA-COMP:13308"/>
        <dbReference type="Rhea" id="RHEA-COMP:13618"/>
        <dbReference type="ChEBI" id="CHEBI:15378"/>
        <dbReference type="ChEBI" id="CHEBI:58223"/>
        <dbReference type="ChEBI" id="CHEBI:67138"/>
        <dbReference type="ChEBI" id="CHEBI:136709"/>
        <dbReference type="ChEBI" id="CHEBI:137540"/>
        <dbReference type="EC" id="2.4.1.313"/>
    </reaction>
</comment>
<comment type="pathway">
    <text>Protein modification; protein glycosylation.</text>
</comment>
<comment type="subcellular location">
    <subcellularLocation>
        <location evidence="1">Golgi apparatus membrane</location>
        <topology evidence="1">Single-pass type II membrane protein</topology>
    </subcellularLocation>
    <subcellularLocation>
        <location evidence="1">Endoplasmic reticulum</location>
    </subcellularLocation>
</comment>
<comment type="alternative products">
    <event type="alternative splicing"/>
    <isoform>
        <id>Q8BG28-1</id>
        <name>1</name>
        <sequence type="displayed"/>
    </isoform>
    <isoform>
        <id>Q8BG28-2</id>
        <name>2</name>
        <sequence type="described" ref="VSP_020253 VSP_020254"/>
    </isoform>
</comment>
<comment type="tissue specificity">
    <text evidence="4">Present in testis (at protein level). In testis, it is mainly detected in the middle layers of seminiferous tubules at stages XII to II. Strongly expressed in primary and secondary spermatocytes and early round spermatids, but not in spermatogonia, elongating or elongated spermatids, or in Leydig or Sertoli cells.</text>
</comment>
<comment type="PTM">
    <text evidence="1">N-glycosylated.</text>
</comment>
<comment type="similarity">
    <text evidence="6">Belongs to the glycosyltransferase 31 family.</text>
</comment>
<keyword id="KW-0025">Alternative splicing</keyword>
<keyword id="KW-0256">Endoplasmic reticulum</keyword>
<keyword id="KW-0325">Glycoprotein</keyword>
<keyword id="KW-0328">Glycosyltransferase</keyword>
<keyword id="KW-0333">Golgi apparatus</keyword>
<keyword id="KW-0472">Membrane</keyword>
<keyword id="KW-1185">Reference proteome</keyword>
<keyword id="KW-0735">Signal-anchor</keyword>
<keyword id="KW-0808">Transferase</keyword>
<keyword id="KW-0812">Transmembrane</keyword>
<keyword id="KW-1133">Transmembrane helix</keyword>
<feature type="chain" id="PRO_0000248363" description="UDP-GalNAc:beta-1,3-N-acetylgalactosaminyltransferase 2">
    <location>
        <begin position="1"/>
        <end position="504"/>
    </location>
</feature>
<feature type="topological domain" description="Cytoplasmic" evidence="3">
    <location>
        <begin position="1"/>
        <end position="3"/>
    </location>
</feature>
<feature type="transmembrane region" description="Helical; Signal-anchor for type II membrane protein" evidence="3">
    <location>
        <begin position="4"/>
        <end position="24"/>
    </location>
</feature>
<feature type="topological domain" description="Lumenal" evidence="3">
    <location>
        <begin position="25"/>
        <end position="504"/>
    </location>
</feature>
<feature type="glycosylation site" description="N-linked (GlcNAc...) asparagine" evidence="3">
    <location>
        <position position="117"/>
    </location>
</feature>
<feature type="glycosylation site" description="N-linked (GlcNAc...) asparagine" evidence="3">
    <location>
        <position position="176"/>
    </location>
</feature>
<feature type="splice variant" id="VSP_020253" description="In isoform 2." evidence="5">
    <original>EALFIARFSPPSCGVQVNKLWY</original>
    <variation>VCTGMDRIFLLLKQLFFVVPID</variation>
    <location>
        <begin position="188"/>
        <end position="209"/>
    </location>
</feature>
<feature type="splice variant" id="VSP_020254" description="In isoform 2." evidence="5">
    <location>
        <begin position="210"/>
        <end position="504"/>
    </location>
</feature>
<feature type="sequence conflict" description="In Ref. 3; AAH85110." evidence="6" ref="3">
    <original>S</original>
    <variation>P</variation>
    <location>
        <position position="60"/>
    </location>
</feature>
<feature type="sequence conflict" description="In Ref. 3; AAH85110." evidence="6" ref="3">
    <original>S</original>
    <variation>G</variation>
    <location>
        <position position="406"/>
    </location>
</feature>
<name>B3GL2_MOUSE</name>
<organism>
    <name type="scientific">Mus musculus</name>
    <name type="common">Mouse</name>
    <dbReference type="NCBI Taxonomy" id="10090"/>
    <lineage>
        <taxon>Eukaryota</taxon>
        <taxon>Metazoa</taxon>
        <taxon>Chordata</taxon>
        <taxon>Craniata</taxon>
        <taxon>Vertebrata</taxon>
        <taxon>Euteleostomi</taxon>
        <taxon>Mammalia</taxon>
        <taxon>Eutheria</taxon>
        <taxon>Euarchontoglires</taxon>
        <taxon>Glires</taxon>
        <taxon>Rodentia</taxon>
        <taxon>Myomorpha</taxon>
        <taxon>Muroidea</taxon>
        <taxon>Muridae</taxon>
        <taxon>Murinae</taxon>
        <taxon>Mus</taxon>
        <taxon>Mus</taxon>
    </lineage>
</organism>